<accession>A7FF39</accession>
<dbReference type="EC" id="6.1.1.6" evidence="1"/>
<dbReference type="EMBL" id="CP000720">
    <property type="protein sequence ID" value="ABS46325.1"/>
    <property type="molecule type" value="Genomic_DNA"/>
</dbReference>
<dbReference type="RefSeq" id="WP_002209930.1">
    <property type="nucleotide sequence ID" value="NC_009708.1"/>
</dbReference>
<dbReference type="SMR" id="A7FF39"/>
<dbReference type="GeneID" id="57973752"/>
<dbReference type="KEGG" id="ypi:YpsIP31758_0883"/>
<dbReference type="HOGENOM" id="CLU_008255_6_0_6"/>
<dbReference type="Proteomes" id="UP000002412">
    <property type="component" value="Chromosome"/>
</dbReference>
<dbReference type="GO" id="GO:0005829">
    <property type="term" value="C:cytosol"/>
    <property type="evidence" value="ECO:0007669"/>
    <property type="project" value="TreeGrafter"/>
</dbReference>
<dbReference type="GO" id="GO:0005524">
    <property type="term" value="F:ATP binding"/>
    <property type="evidence" value="ECO:0007669"/>
    <property type="project" value="UniProtKB-UniRule"/>
</dbReference>
<dbReference type="GO" id="GO:0004824">
    <property type="term" value="F:lysine-tRNA ligase activity"/>
    <property type="evidence" value="ECO:0007669"/>
    <property type="project" value="UniProtKB-UniRule"/>
</dbReference>
<dbReference type="GO" id="GO:0000287">
    <property type="term" value="F:magnesium ion binding"/>
    <property type="evidence" value="ECO:0007669"/>
    <property type="project" value="UniProtKB-UniRule"/>
</dbReference>
<dbReference type="GO" id="GO:0000049">
    <property type="term" value="F:tRNA binding"/>
    <property type="evidence" value="ECO:0007669"/>
    <property type="project" value="TreeGrafter"/>
</dbReference>
<dbReference type="GO" id="GO:0006430">
    <property type="term" value="P:lysyl-tRNA aminoacylation"/>
    <property type="evidence" value="ECO:0007669"/>
    <property type="project" value="UniProtKB-UniRule"/>
</dbReference>
<dbReference type="CDD" id="cd00775">
    <property type="entry name" value="LysRS_core"/>
    <property type="match status" value="1"/>
</dbReference>
<dbReference type="CDD" id="cd04322">
    <property type="entry name" value="LysRS_N"/>
    <property type="match status" value="1"/>
</dbReference>
<dbReference type="FunFam" id="2.40.50.140:FF:000024">
    <property type="entry name" value="Lysine--tRNA ligase"/>
    <property type="match status" value="1"/>
</dbReference>
<dbReference type="FunFam" id="3.30.930.10:FF:000001">
    <property type="entry name" value="Lysine--tRNA ligase"/>
    <property type="match status" value="1"/>
</dbReference>
<dbReference type="Gene3D" id="3.30.930.10">
    <property type="entry name" value="Bira Bifunctional Protein, Domain 2"/>
    <property type="match status" value="1"/>
</dbReference>
<dbReference type="Gene3D" id="2.40.50.140">
    <property type="entry name" value="Nucleic acid-binding proteins"/>
    <property type="match status" value="1"/>
</dbReference>
<dbReference type="HAMAP" id="MF_00252">
    <property type="entry name" value="Lys_tRNA_synth_class2"/>
    <property type="match status" value="1"/>
</dbReference>
<dbReference type="InterPro" id="IPR004364">
    <property type="entry name" value="Aa-tRNA-synt_II"/>
</dbReference>
<dbReference type="InterPro" id="IPR006195">
    <property type="entry name" value="aa-tRNA-synth_II"/>
</dbReference>
<dbReference type="InterPro" id="IPR045864">
    <property type="entry name" value="aa-tRNA-synth_II/BPL/LPL"/>
</dbReference>
<dbReference type="InterPro" id="IPR002313">
    <property type="entry name" value="Lys-tRNA-ligase_II"/>
</dbReference>
<dbReference type="InterPro" id="IPR034762">
    <property type="entry name" value="Lys-tRNA-ligase_II_bac/euk"/>
</dbReference>
<dbReference type="InterPro" id="IPR044136">
    <property type="entry name" value="Lys-tRNA-ligase_II_N"/>
</dbReference>
<dbReference type="InterPro" id="IPR018149">
    <property type="entry name" value="Lys-tRNA-synth_II_C"/>
</dbReference>
<dbReference type="InterPro" id="IPR012340">
    <property type="entry name" value="NA-bd_OB-fold"/>
</dbReference>
<dbReference type="InterPro" id="IPR004365">
    <property type="entry name" value="NA-bd_OB_tRNA"/>
</dbReference>
<dbReference type="NCBIfam" id="TIGR00499">
    <property type="entry name" value="lysS_bact"/>
    <property type="match status" value="1"/>
</dbReference>
<dbReference type="NCBIfam" id="NF001756">
    <property type="entry name" value="PRK00484.1"/>
    <property type="match status" value="1"/>
</dbReference>
<dbReference type="PANTHER" id="PTHR42918:SF15">
    <property type="entry name" value="LYSINE--TRNA LIGASE, CHLOROPLASTIC_MITOCHONDRIAL"/>
    <property type="match status" value="1"/>
</dbReference>
<dbReference type="PANTHER" id="PTHR42918">
    <property type="entry name" value="LYSYL-TRNA SYNTHETASE"/>
    <property type="match status" value="1"/>
</dbReference>
<dbReference type="Pfam" id="PF00152">
    <property type="entry name" value="tRNA-synt_2"/>
    <property type="match status" value="1"/>
</dbReference>
<dbReference type="Pfam" id="PF01336">
    <property type="entry name" value="tRNA_anti-codon"/>
    <property type="match status" value="1"/>
</dbReference>
<dbReference type="PIRSF" id="PIRSF039101">
    <property type="entry name" value="LysRS2"/>
    <property type="match status" value="1"/>
</dbReference>
<dbReference type="PRINTS" id="PR00982">
    <property type="entry name" value="TRNASYNTHLYS"/>
</dbReference>
<dbReference type="SUPFAM" id="SSF55681">
    <property type="entry name" value="Class II aaRS and biotin synthetases"/>
    <property type="match status" value="1"/>
</dbReference>
<dbReference type="SUPFAM" id="SSF50249">
    <property type="entry name" value="Nucleic acid-binding proteins"/>
    <property type="match status" value="1"/>
</dbReference>
<dbReference type="PROSITE" id="PS50862">
    <property type="entry name" value="AA_TRNA_LIGASE_II"/>
    <property type="match status" value="1"/>
</dbReference>
<feature type="chain" id="PRO_1000059047" description="Lysine--tRNA ligase">
    <location>
        <begin position="1"/>
        <end position="505"/>
    </location>
</feature>
<feature type="binding site" evidence="1">
    <location>
        <position position="415"/>
    </location>
    <ligand>
        <name>Mg(2+)</name>
        <dbReference type="ChEBI" id="CHEBI:18420"/>
        <label>1</label>
    </ligand>
</feature>
<feature type="binding site" evidence="1">
    <location>
        <position position="422"/>
    </location>
    <ligand>
        <name>Mg(2+)</name>
        <dbReference type="ChEBI" id="CHEBI:18420"/>
        <label>1</label>
    </ligand>
</feature>
<feature type="binding site" evidence="1">
    <location>
        <position position="422"/>
    </location>
    <ligand>
        <name>Mg(2+)</name>
        <dbReference type="ChEBI" id="CHEBI:18420"/>
        <label>2</label>
    </ligand>
</feature>
<gene>
    <name evidence="1" type="primary">lysS</name>
    <name type="ordered locus">YpsIP31758_0883</name>
</gene>
<name>SYK_YERP3</name>
<comment type="catalytic activity">
    <reaction evidence="1">
        <text>tRNA(Lys) + L-lysine + ATP = L-lysyl-tRNA(Lys) + AMP + diphosphate</text>
        <dbReference type="Rhea" id="RHEA:20792"/>
        <dbReference type="Rhea" id="RHEA-COMP:9696"/>
        <dbReference type="Rhea" id="RHEA-COMP:9697"/>
        <dbReference type="ChEBI" id="CHEBI:30616"/>
        <dbReference type="ChEBI" id="CHEBI:32551"/>
        <dbReference type="ChEBI" id="CHEBI:33019"/>
        <dbReference type="ChEBI" id="CHEBI:78442"/>
        <dbReference type="ChEBI" id="CHEBI:78529"/>
        <dbReference type="ChEBI" id="CHEBI:456215"/>
        <dbReference type="EC" id="6.1.1.6"/>
    </reaction>
</comment>
<comment type="cofactor">
    <cofactor evidence="1">
        <name>Mg(2+)</name>
        <dbReference type="ChEBI" id="CHEBI:18420"/>
    </cofactor>
    <text evidence="1">Binds 3 Mg(2+) ions per subunit.</text>
</comment>
<comment type="subunit">
    <text evidence="1">Homodimer.</text>
</comment>
<comment type="subcellular location">
    <subcellularLocation>
        <location evidence="1">Cytoplasm</location>
    </subcellularLocation>
</comment>
<comment type="similarity">
    <text evidence="1">Belongs to the class-II aminoacyl-tRNA synthetase family.</text>
</comment>
<organism>
    <name type="scientific">Yersinia pseudotuberculosis serotype O:1b (strain IP 31758)</name>
    <dbReference type="NCBI Taxonomy" id="349747"/>
    <lineage>
        <taxon>Bacteria</taxon>
        <taxon>Pseudomonadati</taxon>
        <taxon>Pseudomonadota</taxon>
        <taxon>Gammaproteobacteria</taxon>
        <taxon>Enterobacterales</taxon>
        <taxon>Yersiniaceae</taxon>
        <taxon>Yersinia</taxon>
    </lineage>
</organism>
<sequence length="505" mass="57577">MSEQKPQVAEQAQELNSELQARREKLAVLRGKGIAFPNDFRRENLSDQLHAEFDSKENEELEALNIDVTVAGRMMTRRIMGKASFVTLQDVGGRIQLYVSRDDLPEGVYNEEFKKWDLGDILGARGKLFKTKTGELSIHCSELRLLTKALRPLPDKFHGLADQETRYRQRYLDLIANDESRHTFKVRSQVMSGIRSFMVEKGFMEVETPMMQVIPGGASARPFVTHHNALDIDMYLRIAPELYLKRLVVGGFERVFEINRNFRNEGVSPRHNPEFTMMELYMAYADYKDLIVLTEELFRTLTETILGSSVVQYGEQTFDFGKPFAKLTMKEAICKYRPETNVADLDDMDKAVAIAESLGIKVEKSWGLGRIQCEIFEETAESHLIQPTFITEYPAEVSPLARRNDDNPFITDRFEFFIGGREIGNGFSELNDAEDQAQRFADQVSAKEAGDDEAMFYDEDYITALEHGLPPTAGLGIGIDRMVMLFTNSHTIRDVILFPAMRPVK</sequence>
<reference key="1">
    <citation type="journal article" date="2007" name="PLoS Genet.">
        <title>The complete genome sequence of Yersinia pseudotuberculosis IP31758, the causative agent of Far East scarlet-like fever.</title>
        <authorList>
            <person name="Eppinger M."/>
            <person name="Rosovitz M.J."/>
            <person name="Fricke W.F."/>
            <person name="Rasko D.A."/>
            <person name="Kokorina G."/>
            <person name="Fayolle C."/>
            <person name="Lindler L.E."/>
            <person name="Carniel E."/>
            <person name="Ravel J."/>
        </authorList>
    </citation>
    <scope>NUCLEOTIDE SEQUENCE [LARGE SCALE GENOMIC DNA]</scope>
    <source>
        <strain>IP 31758</strain>
    </source>
</reference>
<evidence type="ECO:0000255" key="1">
    <source>
        <dbReference type="HAMAP-Rule" id="MF_00252"/>
    </source>
</evidence>
<keyword id="KW-0030">Aminoacyl-tRNA synthetase</keyword>
<keyword id="KW-0067">ATP-binding</keyword>
<keyword id="KW-0963">Cytoplasm</keyword>
<keyword id="KW-0436">Ligase</keyword>
<keyword id="KW-0460">Magnesium</keyword>
<keyword id="KW-0479">Metal-binding</keyword>
<keyword id="KW-0547">Nucleotide-binding</keyword>
<keyword id="KW-0648">Protein biosynthesis</keyword>
<proteinExistence type="inferred from homology"/>
<protein>
    <recommendedName>
        <fullName evidence="1">Lysine--tRNA ligase</fullName>
        <ecNumber evidence="1">6.1.1.6</ecNumber>
    </recommendedName>
    <alternativeName>
        <fullName evidence="1">Lysyl-tRNA synthetase</fullName>
        <shortName evidence="1">LysRS</shortName>
    </alternativeName>
</protein>